<keyword id="KW-1185">Reference proteome</keyword>
<keyword id="KW-0678">Repressor</keyword>
<keyword id="KW-0346">Stress response</keyword>
<keyword id="KW-0804">Transcription</keyword>
<keyword id="KW-0805">Transcription regulation</keyword>
<reference key="1">
    <citation type="journal article" date="2006" name="J. Bacteriol.">
        <title>The genome sequence of the obligately chemolithoautotrophic, facultatively anaerobic bacterium Thiobacillus denitrificans.</title>
        <authorList>
            <person name="Beller H.R."/>
            <person name="Chain P.S."/>
            <person name="Letain T.E."/>
            <person name="Chakicherla A."/>
            <person name="Larimer F.W."/>
            <person name="Richardson P.M."/>
            <person name="Coleman M.A."/>
            <person name="Wood A.P."/>
            <person name="Kelly D.P."/>
        </authorList>
    </citation>
    <scope>NUCLEOTIDE SEQUENCE [LARGE SCALE GENOMIC DNA]</scope>
    <source>
        <strain>ATCC 25259 / T1</strain>
    </source>
</reference>
<evidence type="ECO:0000255" key="1">
    <source>
        <dbReference type="HAMAP-Rule" id="MF_00081"/>
    </source>
</evidence>
<sequence>MLNDRARILLKTLVERYISEGEPVGSRTLSKHAGLDLSPASIRNIMSDLEEMGFVASPHTSAGRVPTPRGYRFFVDTLLTVRPLDQVSVNHLENSLAASDPQRLMTAASTLLSDLSQFAGLVMTPRRNPAFRQIEFLTLSDKRVLLIIVTMEGEVENRVIVTEQSYSAAALTEAANYFNQNFAGHSFDHVRSKLRDELGRMRDDITRLMAAAVDAGTQALDASQDNVVVSGSRKLLDVEELSSNMRSLRRLFDAFEKKTGLLQLLDQSRSAAGVQIFIGGESELLPLDECSLVTAPYSVDGVVVGTLGVVGPTRMAYERVVPIVDVTAKILSSALSQHK</sequence>
<comment type="function">
    <text evidence="1">Negative regulator of class I heat shock genes (grpE-dnaK-dnaJ and groELS operons). Prevents heat-shock induction of these operons.</text>
</comment>
<comment type="similarity">
    <text evidence="1">Belongs to the HrcA family.</text>
</comment>
<feature type="chain" id="PRO_1000010477" description="Heat-inducible transcription repressor HrcA">
    <location>
        <begin position="1"/>
        <end position="339"/>
    </location>
</feature>
<gene>
    <name evidence="1" type="primary">hrcA</name>
    <name type="ordered locus">Tbd_2032</name>
</gene>
<organism>
    <name type="scientific">Thiobacillus denitrificans (strain ATCC 25259 / T1)</name>
    <dbReference type="NCBI Taxonomy" id="292415"/>
    <lineage>
        <taxon>Bacteria</taxon>
        <taxon>Pseudomonadati</taxon>
        <taxon>Pseudomonadota</taxon>
        <taxon>Betaproteobacteria</taxon>
        <taxon>Nitrosomonadales</taxon>
        <taxon>Thiobacillaceae</taxon>
        <taxon>Thiobacillus</taxon>
    </lineage>
</organism>
<name>HRCA_THIDA</name>
<protein>
    <recommendedName>
        <fullName evidence="1">Heat-inducible transcription repressor HrcA</fullName>
    </recommendedName>
</protein>
<accession>Q3SHA4</accession>
<dbReference type="EMBL" id="CP000116">
    <property type="protein sequence ID" value="AAZ97985.1"/>
    <property type="molecule type" value="Genomic_DNA"/>
</dbReference>
<dbReference type="RefSeq" id="WP_011312544.1">
    <property type="nucleotide sequence ID" value="NC_007404.1"/>
</dbReference>
<dbReference type="SMR" id="Q3SHA4"/>
<dbReference type="STRING" id="292415.Tbd_2032"/>
<dbReference type="KEGG" id="tbd:Tbd_2032"/>
<dbReference type="eggNOG" id="COG1420">
    <property type="taxonomic scope" value="Bacteria"/>
</dbReference>
<dbReference type="HOGENOM" id="CLU_050019_0_0_4"/>
<dbReference type="OrthoDB" id="9783139at2"/>
<dbReference type="Proteomes" id="UP000008291">
    <property type="component" value="Chromosome"/>
</dbReference>
<dbReference type="GO" id="GO:0003677">
    <property type="term" value="F:DNA binding"/>
    <property type="evidence" value="ECO:0007669"/>
    <property type="project" value="InterPro"/>
</dbReference>
<dbReference type="GO" id="GO:0045892">
    <property type="term" value="P:negative regulation of DNA-templated transcription"/>
    <property type="evidence" value="ECO:0007669"/>
    <property type="project" value="UniProtKB-UniRule"/>
</dbReference>
<dbReference type="Gene3D" id="3.30.450.40">
    <property type="match status" value="1"/>
</dbReference>
<dbReference type="Gene3D" id="1.10.10.10">
    <property type="entry name" value="Winged helix-like DNA-binding domain superfamily/Winged helix DNA-binding domain"/>
    <property type="match status" value="1"/>
</dbReference>
<dbReference type="HAMAP" id="MF_00081">
    <property type="entry name" value="HrcA"/>
    <property type="match status" value="1"/>
</dbReference>
<dbReference type="InterPro" id="IPR029016">
    <property type="entry name" value="GAF-like_dom_sf"/>
</dbReference>
<dbReference type="InterPro" id="IPR002571">
    <property type="entry name" value="HrcA"/>
</dbReference>
<dbReference type="InterPro" id="IPR021153">
    <property type="entry name" value="HrcA_C"/>
</dbReference>
<dbReference type="InterPro" id="IPR036388">
    <property type="entry name" value="WH-like_DNA-bd_sf"/>
</dbReference>
<dbReference type="InterPro" id="IPR036390">
    <property type="entry name" value="WH_DNA-bd_sf"/>
</dbReference>
<dbReference type="NCBIfam" id="TIGR00331">
    <property type="entry name" value="hrcA"/>
    <property type="match status" value="1"/>
</dbReference>
<dbReference type="PANTHER" id="PTHR34824">
    <property type="entry name" value="HEAT-INDUCIBLE TRANSCRIPTION REPRESSOR HRCA"/>
    <property type="match status" value="1"/>
</dbReference>
<dbReference type="PANTHER" id="PTHR34824:SF1">
    <property type="entry name" value="HEAT-INDUCIBLE TRANSCRIPTION REPRESSOR HRCA"/>
    <property type="match status" value="1"/>
</dbReference>
<dbReference type="Pfam" id="PF01628">
    <property type="entry name" value="HrcA"/>
    <property type="match status" value="1"/>
</dbReference>
<dbReference type="PIRSF" id="PIRSF005485">
    <property type="entry name" value="HrcA"/>
    <property type="match status" value="1"/>
</dbReference>
<dbReference type="SUPFAM" id="SSF55781">
    <property type="entry name" value="GAF domain-like"/>
    <property type="match status" value="1"/>
</dbReference>
<dbReference type="SUPFAM" id="SSF46785">
    <property type="entry name" value="Winged helix' DNA-binding domain"/>
    <property type="match status" value="1"/>
</dbReference>
<proteinExistence type="inferred from homology"/>